<keyword id="KW-0298">Galactitol metabolism</keyword>
<keyword id="KW-1185">Reference proteome</keyword>
<gene>
    <name evidence="1" type="primary">gatZ</name>
    <name type="ordered locus">SF2157</name>
    <name type="ordered locus">S2283</name>
</gene>
<proteinExistence type="inferred from homology"/>
<feature type="chain" id="PRO_0000372520" description="D-tagatose-1,6-bisphosphate aldolase subunit GatZ">
    <location>
        <begin position="1"/>
        <end position="420"/>
    </location>
</feature>
<dbReference type="EMBL" id="AE005674">
    <property type="protein sequence ID" value="AAN43690.1"/>
    <property type="molecule type" value="Genomic_DNA"/>
</dbReference>
<dbReference type="EMBL" id="AE014073">
    <property type="protein sequence ID" value="AAP17516.1"/>
    <property type="molecule type" value="Genomic_DNA"/>
</dbReference>
<dbReference type="RefSeq" id="NP_707983.1">
    <property type="nucleotide sequence ID" value="NC_004337.2"/>
</dbReference>
<dbReference type="RefSeq" id="WP_000853873.1">
    <property type="nucleotide sequence ID" value="NZ_WPGV01000079.1"/>
</dbReference>
<dbReference type="SMR" id="Q83KH7"/>
<dbReference type="STRING" id="198214.SF2157"/>
<dbReference type="PaxDb" id="198214-SF2157"/>
<dbReference type="GeneID" id="1025323"/>
<dbReference type="KEGG" id="sfl:SF2157"/>
<dbReference type="KEGG" id="sfx:S2283"/>
<dbReference type="PATRIC" id="fig|198214.7.peg.2572"/>
<dbReference type="HOGENOM" id="CLU_053334_0_0_6"/>
<dbReference type="UniPathway" id="UPA00704">
    <property type="reaction ID" value="UER00716"/>
</dbReference>
<dbReference type="Proteomes" id="UP000001006">
    <property type="component" value="Chromosome"/>
</dbReference>
<dbReference type="Proteomes" id="UP000002673">
    <property type="component" value="Chromosome"/>
</dbReference>
<dbReference type="GO" id="GO:0005886">
    <property type="term" value="C:plasma membrane"/>
    <property type="evidence" value="ECO:0007669"/>
    <property type="project" value="TreeGrafter"/>
</dbReference>
<dbReference type="GO" id="GO:2001059">
    <property type="term" value="P:D-tagatose 6-phosphate catabolic process"/>
    <property type="evidence" value="ECO:0007669"/>
    <property type="project" value="UniProtKB-UniRule"/>
</dbReference>
<dbReference type="GO" id="GO:0019402">
    <property type="term" value="P:galactitol metabolic process"/>
    <property type="evidence" value="ECO:0007669"/>
    <property type="project" value="UniProtKB-KW"/>
</dbReference>
<dbReference type="GO" id="GO:0009401">
    <property type="term" value="P:phosphoenolpyruvate-dependent sugar phosphotransferase system"/>
    <property type="evidence" value="ECO:0007669"/>
    <property type="project" value="TreeGrafter"/>
</dbReference>
<dbReference type="FunFam" id="3.20.20.70:FF:000141">
    <property type="entry name" value="D-tagatose-1,6-bisphosphate aldolase subunit GatZ"/>
    <property type="match status" value="1"/>
</dbReference>
<dbReference type="Gene3D" id="3.20.20.70">
    <property type="entry name" value="Aldolase class I"/>
    <property type="match status" value="1"/>
</dbReference>
<dbReference type="Gene3D" id="1.10.400.20">
    <property type="entry name" value="putative tagatose 6-phosphate kinase domain like"/>
    <property type="match status" value="1"/>
</dbReference>
<dbReference type="HAMAP" id="MF_01296">
    <property type="entry name" value="Tagatose_aldol_GatZ"/>
    <property type="match status" value="1"/>
</dbReference>
<dbReference type="InterPro" id="IPR013785">
    <property type="entry name" value="Aldolase_TIM"/>
</dbReference>
<dbReference type="InterPro" id="IPR012062">
    <property type="entry name" value="GatZ/KbaZ-like"/>
</dbReference>
<dbReference type="InterPro" id="IPR050303">
    <property type="entry name" value="GatZ_KbaZ_carbometab"/>
</dbReference>
<dbReference type="InterPro" id="IPR023436">
    <property type="entry name" value="TagBP_ald_GatZ"/>
</dbReference>
<dbReference type="NCBIfam" id="TIGR02810">
    <property type="entry name" value="agaZ_gatZ"/>
    <property type="match status" value="1"/>
</dbReference>
<dbReference type="NCBIfam" id="NF011626">
    <property type="entry name" value="PRK15052.1"/>
    <property type="match status" value="1"/>
</dbReference>
<dbReference type="PANTHER" id="PTHR32502:SF12">
    <property type="entry name" value="D-TAGATOSE-1,6-BISPHOSPHATE ALDOLASE SUBUNIT GATZ"/>
    <property type="match status" value="1"/>
</dbReference>
<dbReference type="PANTHER" id="PTHR32502">
    <property type="entry name" value="N-ACETYLGALACTOSAMINE PERMEASE II COMPONENT-RELATED"/>
    <property type="match status" value="1"/>
</dbReference>
<dbReference type="Pfam" id="PF08013">
    <property type="entry name" value="GatZ_KbaZ-like"/>
    <property type="match status" value="1"/>
</dbReference>
<dbReference type="PIRSF" id="PIRSF009264">
    <property type="entry name" value="TagBP_ald_AgaZ"/>
    <property type="match status" value="1"/>
</dbReference>
<dbReference type="SUPFAM" id="SSF51569">
    <property type="entry name" value="Aldolase"/>
    <property type="match status" value="1"/>
</dbReference>
<evidence type="ECO:0000255" key="1">
    <source>
        <dbReference type="HAMAP-Rule" id="MF_01296"/>
    </source>
</evidence>
<organism>
    <name type="scientific">Shigella flexneri</name>
    <dbReference type="NCBI Taxonomy" id="623"/>
    <lineage>
        <taxon>Bacteria</taxon>
        <taxon>Pseudomonadati</taxon>
        <taxon>Pseudomonadota</taxon>
        <taxon>Gammaproteobacteria</taxon>
        <taxon>Enterobacterales</taxon>
        <taxon>Enterobacteriaceae</taxon>
        <taxon>Shigella</taxon>
    </lineage>
</organism>
<accession>Q83KH7</accession>
<accession>Q7C0Y2</accession>
<comment type="function">
    <text evidence="1">Component of the tagatose-1,6-bisphosphate aldolase GatYZ that is required for full activity and stability of the Y subunit. Could have a chaperone-like function for the proper and stable folding of GatY. When expressed alone, GatZ does not show any aldolase activity. Is involved in the catabolism of galactitol.</text>
</comment>
<comment type="pathway">
    <text evidence="1">Carbohydrate metabolism; D-tagatose 6-phosphate degradation; D-glyceraldehyde 3-phosphate and glycerone phosphate from D-tagatose 6-phosphate: step 2/2.</text>
</comment>
<comment type="subunit">
    <text evidence="1">Forms a complex with GatY.</text>
</comment>
<comment type="similarity">
    <text evidence="1">Belongs to the GatZ/KbaZ family. GatZ subfamily.</text>
</comment>
<reference key="1">
    <citation type="journal article" date="2002" name="Nucleic Acids Res.">
        <title>Genome sequence of Shigella flexneri 2a: insights into pathogenicity through comparison with genomes of Escherichia coli K12 and O157.</title>
        <authorList>
            <person name="Jin Q."/>
            <person name="Yuan Z."/>
            <person name="Xu J."/>
            <person name="Wang Y."/>
            <person name="Shen Y."/>
            <person name="Lu W."/>
            <person name="Wang J."/>
            <person name="Liu H."/>
            <person name="Yang J."/>
            <person name="Yang F."/>
            <person name="Zhang X."/>
            <person name="Zhang J."/>
            <person name="Yang G."/>
            <person name="Wu H."/>
            <person name="Qu D."/>
            <person name="Dong J."/>
            <person name="Sun L."/>
            <person name="Xue Y."/>
            <person name="Zhao A."/>
            <person name="Gao Y."/>
            <person name="Zhu J."/>
            <person name="Kan B."/>
            <person name="Ding K."/>
            <person name="Chen S."/>
            <person name="Cheng H."/>
            <person name="Yao Z."/>
            <person name="He B."/>
            <person name="Chen R."/>
            <person name="Ma D."/>
            <person name="Qiang B."/>
            <person name="Wen Y."/>
            <person name="Hou Y."/>
            <person name="Yu J."/>
        </authorList>
    </citation>
    <scope>NUCLEOTIDE SEQUENCE [LARGE SCALE GENOMIC DNA]</scope>
    <source>
        <strain>301 / Serotype 2a</strain>
    </source>
</reference>
<reference key="2">
    <citation type="journal article" date="2003" name="Infect. Immun.">
        <title>Complete genome sequence and comparative genomics of Shigella flexneri serotype 2a strain 2457T.</title>
        <authorList>
            <person name="Wei J."/>
            <person name="Goldberg M.B."/>
            <person name="Burland V."/>
            <person name="Venkatesan M.M."/>
            <person name="Deng W."/>
            <person name="Fournier G."/>
            <person name="Mayhew G.F."/>
            <person name="Plunkett G. III"/>
            <person name="Rose D.J."/>
            <person name="Darling A."/>
            <person name="Mau B."/>
            <person name="Perna N.T."/>
            <person name="Payne S.M."/>
            <person name="Runyen-Janecky L.J."/>
            <person name="Zhou S."/>
            <person name="Schwartz D.C."/>
            <person name="Blattner F.R."/>
        </authorList>
    </citation>
    <scope>NUCLEOTIDE SEQUENCE [LARGE SCALE GENOMIC DNA]</scope>
    <source>
        <strain>ATCC 700930 / 2457T / Serotype 2a</strain>
    </source>
</reference>
<protein>
    <recommendedName>
        <fullName evidence="1">D-tagatose-1,6-bisphosphate aldolase subunit GatZ</fullName>
    </recommendedName>
</protein>
<name>GATZ_SHIFL</name>
<sequence length="420" mass="47045">MKTLIARHKAGEHIGICSVCSAHPLVIEAALAFDRNSTRKVLIEATSNQVNQFGGYTGMTPADFREFVFTIADKVGFARERIILGGDHLGPNCWQQENADAAMEKSVELVKAYVRAGFSKIHLDASMSCAGDTIPLAPETVAERAAVLCFAAESVATDCQREQLSYVIGTEVPVPGGEASAIQSVHITHVEDAANTLRTHQKAFIARGLTEALTRVIAIVVQPGVEFDHSNIIHYQPQEAQALAQWIENTRMVYEAHSTDYQTRTAYWELVRDHFAILKVGPALTFALREAIFALAQIEQELIAPENRSGCLAVIEEVMLDEPQYWKKYYRTGFNDSLLDIRYSLSDRIRYYWPHSRIKNSVETMMVNLQGVDIPLGMISQYLPKQFERIQSGELSAMPHQLIMNKIYDVLRAYRYGCAE</sequence>